<accession>Q7MWY2</accession>
<sequence length="244" mass="26115">MSFNLIVDQGNSACKVAFVRNNSIESISFLPGKAGQALSHLVAPHRFDKAIYSSVGLPDEEAEAIVRSCAAASLMMGTETPVPLRLQYDRRTLGADRLAAVVGAHSLYPNTELLVIDAGTAITYERVSAEGIYLGGNISPGLHLRFKALHLFTGRLPLIDPSGISPKIAEYGSSTEEAITAGVIHGLAGEIDRYIDDLHAKEGRSAVILTGGDANYLARIIRSGILIHPDLVLLGLNRILEYNV</sequence>
<name>COAX_PORGI</name>
<keyword id="KW-0067">ATP-binding</keyword>
<keyword id="KW-0173">Coenzyme A biosynthesis</keyword>
<keyword id="KW-0963">Cytoplasm</keyword>
<keyword id="KW-0418">Kinase</keyword>
<keyword id="KW-0479">Metal-binding</keyword>
<keyword id="KW-0547">Nucleotide-binding</keyword>
<keyword id="KW-0630">Potassium</keyword>
<keyword id="KW-1185">Reference proteome</keyword>
<keyword id="KW-0808">Transferase</keyword>
<dbReference type="EC" id="2.7.1.33" evidence="1"/>
<dbReference type="EMBL" id="AE015924">
    <property type="protein sequence ID" value="AAQ65646.1"/>
    <property type="status" value="ALT_INIT"/>
    <property type="molecule type" value="Genomic_DNA"/>
</dbReference>
<dbReference type="RefSeq" id="WP_005873400.1">
    <property type="nucleotide sequence ID" value="NC_002950.2"/>
</dbReference>
<dbReference type="SMR" id="Q7MWY2"/>
<dbReference type="STRING" id="242619.PG_0447"/>
<dbReference type="EnsemblBacteria" id="AAQ65646">
    <property type="protein sequence ID" value="AAQ65646"/>
    <property type="gene ID" value="PG_0447"/>
</dbReference>
<dbReference type="KEGG" id="pgi:PG_0447"/>
<dbReference type="PATRIC" id="fig|242619.8.peg.407"/>
<dbReference type="eggNOG" id="COG1521">
    <property type="taxonomic scope" value="Bacteria"/>
</dbReference>
<dbReference type="HOGENOM" id="CLU_066627_2_0_10"/>
<dbReference type="BioCyc" id="PGIN242619:G1G02-415-MONOMER"/>
<dbReference type="UniPathway" id="UPA00241">
    <property type="reaction ID" value="UER00352"/>
</dbReference>
<dbReference type="Proteomes" id="UP000000588">
    <property type="component" value="Chromosome"/>
</dbReference>
<dbReference type="GO" id="GO:0005737">
    <property type="term" value="C:cytoplasm"/>
    <property type="evidence" value="ECO:0007669"/>
    <property type="project" value="UniProtKB-SubCell"/>
</dbReference>
<dbReference type="GO" id="GO:0005524">
    <property type="term" value="F:ATP binding"/>
    <property type="evidence" value="ECO:0007669"/>
    <property type="project" value="UniProtKB-UniRule"/>
</dbReference>
<dbReference type="GO" id="GO:0046872">
    <property type="term" value="F:metal ion binding"/>
    <property type="evidence" value="ECO:0007669"/>
    <property type="project" value="UniProtKB-KW"/>
</dbReference>
<dbReference type="GO" id="GO:0004594">
    <property type="term" value="F:pantothenate kinase activity"/>
    <property type="evidence" value="ECO:0007669"/>
    <property type="project" value="UniProtKB-UniRule"/>
</dbReference>
<dbReference type="GO" id="GO:0015937">
    <property type="term" value="P:coenzyme A biosynthetic process"/>
    <property type="evidence" value="ECO:0007669"/>
    <property type="project" value="UniProtKB-UniRule"/>
</dbReference>
<dbReference type="CDD" id="cd24015">
    <property type="entry name" value="ASKHA_NBD_PanK-III"/>
    <property type="match status" value="1"/>
</dbReference>
<dbReference type="Gene3D" id="3.30.420.40">
    <property type="match status" value="1"/>
</dbReference>
<dbReference type="HAMAP" id="MF_01274">
    <property type="entry name" value="Pantothen_kinase_3"/>
    <property type="match status" value="1"/>
</dbReference>
<dbReference type="InterPro" id="IPR043129">
    <property type="entry name" value="ATPase_NBD"/>
</dbReference>
<dbReference type="InterPro" id="IPR004619">
    <property type="entry name" value="Type_III_PanK"/>
</dbReference>
<dbReference type="NCBIfam" id="TIGR00671">
    <property type="entry name" value="baf"/>
    <property type="match status" value="1"/>
</dbReference>
<dbReference type="NCBIfam" id="NF009851">
    <property type="entry name" value="PRK13320.1-3"/>
    <property type="match status" value="1"/>
</dbReference>
<dbReference type="PANTHER" id="PTHR34265">
    <property type="entry name" value="TYPE III PANTOTHENATE KINASE"/>
    <property type="match status" value="1"/>
</dbReference>
<dbReference type="PANTHER" id="PTHR34265:SF1">
    <property type="entry name" value="TYPE III PANTOTHENATE KINASE"/>
    <property type="match status" value="1"/>
</dbReference>
<dbReference type="Pfam" id="PF03309">
    <property type="entry name" value="Pan_kinase"/>
    <property type="match status" value="1"/>
</dbReference>
<dbReference type="SUPFAM" id="SSF53067">
    <property type="entry name" value="Actin-like ATPase domain"/>
    <property type="match status" value="2"/>
</dbReference>
<evidence type="ECO:0000255" key="1">
    <source>
        <dbReference type="HAMAP-Rule" id="MF_01274"/>
    </source>
</evidence>
<evidence type="ECO:0000305" key="2"/>
<protein>
    <recommendedName>
        <fullName evidence="1">Type III pantothenate kinase</fullName>
        <ecNumber evidence="1">2.7.1.33</ecNumber>
    </recommendedName>
    <alternativeName>
        <fullName evidence="1">PanK-III</fullName>
    </alternativeName>
    <alternativeName>
        <fullName evidence="1">Pantothenic acid kinase</fullName>
    </alternativeName>
</protein>
<proteinExistence type="inferred from homology"/>
<comment type="function">
    <text evidence="1">Catalyzes the phosphorylation of pantothenate (Pan), the first step in CoA biosynthesis.</text>
</comment>
<comment type="catalytic activity">
    <reaction evidence="1">
        <text>(R)-pantothenate + ATP = (R)-4'-phosphopantothenate + ADP + H(+)</text>
        <dbReference type="Rhea" id="RHEA:16373"/>
        <dbReference type="ChEBI" id="CHEBI:10986"/>
        <dbReference type="ChEBI" id="CHEBI:15378"/>
        <dbReference type="ChEBI" id="CHEBI:29032"/>
        <dbReference type="ChEBI" id="CHEBI:30616"/>
        <dbReference type="ChEBI" id="CHEBI:456216"/>
        <dbReference type="EC" id="2.7.1.33"/>
    </reaction>
</comment>
<comment type="cofactor">
    <cofactor evidence="1">
        <name>NH4(+)</name>
        <dbReference type="ChEBI" id="CHEBI:28938"/>
    </cofactor>
    <cofactor evidence="1">
        <name>K(+)</name>
        <dbReference type="ChEBI" id="CHEBI:29103"/>
    </cofactor>
    <text evidence="1">A monovalent cation. Ammonium or potassium.</text>
</comment>
<comment type="pathway">
    <text evidence="1">Cofactor biosynthesis; coenzyme A biosynthesis; CoA from (R)-pantothenate: step 1/5.</text>
</comment>
<comment type="subunit">
    <text evidence="1">Homodimer.</text>
</comment>
<comment type="subcellular location">
    <subcellularLocation>
        <location evidence="1">Cytoplasm</location>
    </subcellularLocation>
</comment>
<comment type="similarity">
    <text evidence="1">Belongs to the type III pantothenate kinase family.</text>
</comment>
<comment type="sequence caution" evidence="2">
    <conflict type="erroneous initiation">
        <sequence resource="EMBL-CDS" id="AAQ65646"/>
    </conflict>
</comment>
<organism>
    <name type="scientific">Porphyromonas gingivalis (strain ATCC BAA-308 / W83)</name>
    <dbReference type="NCBI Taxonomy" id="242619"/>
    <lineage>
        <taxon>Bacteria</taxon>
        <taxon>Pseudomonadati</taxon>
        <taxon>Bacteroidota</taxon>
        <taxon>Bacteroidia</taxon>
        <taxon>Bacteroidales</taxon>
        <taxon>Porphyromonadaceae</taxon>
        <taxon>Porphyromonas</taxon>
    </lineage>
</organism>
<gene>
    <name evidence="1" type="primary">coaX</name>
    <name type="ordered locus">PG_0447</name>
</gene>
<reference key="1">
    <citation type="journal article" date="2003" name="J. Bacteriol.">
        <title>Complete genome sequence of the oral pathogenic bacterium Porphyromonas gingivalis strain W83.</title>
        <authorList>
            <person name="Nelson K.E."/>
            <person name="Fleischmann R.D."/>
            <person name="DeBoy R.T."/>
            <person name="Paulsen I.T."/>
            <person name="Fouts D.E."/>
            <person name="Eisen J.A."/>
            <person name="Daugherty S.C."/>
            <person name="Dodson R.J."/>
            <person name="Durkin A.S."/>
            <person name="Gwinn M.L."/>
            <person name="Haft D.H."/>
            <person name="Kolonay J.F."/>
            <person name="Nelson W.C."/>
            <person name="Mason T.M."/>
            <person name="Tallon L."/>
            <person name="Gray J."/>
            <person name="Granger D."/>
            <person name="Tettelin H."/>
            <person name="Dong H."/>
            <person name="Galvin J.L."/>
            <person name="Duncan M.J."/>
            <person name="Dewhirst F.E."/>
            <person name="Fraser C.M."/>
        </authorList>
    </citation>
    <scope>NUCLEOTIDE SEQUENCE [LARGE SCALE GENOMIC DNA]</scope>
    <source>
        <strain>ATCC BAA-308 / W83</strain>
    </source>
</reference>
<feature type="chain" id="PRO_0000270889" description="Type III pantothenate kinase">
    <location>
        <begin position="1"/>
        <end position="244"/>
    </location>
</feature>
<feature type="active site" description="Proton acceptor" evidence="1">
    <location>
        <position position="96"/>
    </location>
</feature>
<feature type="binding site" evidence="1">
    <location>
        <begin position="8"/>
        <end position="15"/>
    </location>
    <ligand>
        <name>ATP</name>
        <dbReference type="ChEBI" id="CHEBI:30616"/>
    </ligand>
</feature>
<feature type="binding site" evidence="1">
    <location>
        <position position="88"/>
    </location>
    <ligand>
        <name>substrate</name>
    </ligand>
</feature>
<feature type="binding site" evidence="1">
    <location>
        <begin position="94"/>
        <end position="97"/>
    </location>
    <ligand>
        <name>substrate</name>
    </ligand>
</feature>
<feature type="binding site" evidence="1">
    <location>
        <position position="117"/>
    </location>
    <ligand>
        <name>K(+)</name>
        <dbReference type="ChEBI" id="CHEBI:29103"/>
    </ligand>
</feature>
<feature type="binding site" evidence="1">
    <location>
        <position position="120"/>
    </location>
    <ligand>
        <name>ATP</name>
        <dbReference type="ChEBI" id="CHEBI:30616"/>
    </ligand>
</feature>
<feature type="binding site" evidence="1">
    <location>
        <position position="175"/>
    </location>
    <ligand>
        <name>substrate</name>
    </ligand>
</feature>